<accession>C4K7K8</accession>
<feature type="chain" id="PRO_1000215454" description="Ribosomal RNA large subunit methyltransferase E">
    <location>
        <begin position="1"/>
        <end position="208"/>
    </location>
</feature>
<feature type="active site" description="Proton acceptor" evidence="1">
    <location>
        <position position="164"/>
    </location>
</feature>
<feature type="binding site" evidence="1">
    <location>
        <position position="63"/>
    </location>
    <ligand>
        <name>S-adenosyl-L-methionine</name>
        <dbReference type="ChEBI" id="CHEBI:59789"/>
    </ligand>
</feature>
<feature type="binding site" evidence="1">
    <location>
        <position position="65"/>
    </location>
    <ligand>
        <name>S-adenosyl-L-methionine</name>
        <dbReference type="ChEBI" id="CHEBI:59789"/>
    </ligand>
</feature>
<feature type="binding site" evidence="1">
    <location>
        <position position="83"/>
    </location>
    <ligand>
        <name>S-adenosyl-L-methionine</name>
        <dbReference type="ChEBI" id="CHEBI:59789"/>
    </ligand>
</feature>
<feature type="binding site" evidence="1">
    <location>
        <position position="99"/>
    </location>
    <ligand>
        <name>S-adenosyl-L-methionine</name>
        <dbReference type="ChEBI" id="CHEBI:59789"/>
    </ligand>
</feature>
<feature type="binding site" evidence="1">
    <location>
        <position position="124"/>
    </location>
    <ligand>
        <name>S-adenosyl-L-methionine</name>
        <dbReference type="ChEBI" id="CHEBI:59789"/>
    </ligand>
</feature>
<protein>
    <recommendedName>
        <fullName evidence="1">Ribosomal RNA large subunit methyltransferase E</fullName>
        <ecNumber evidence="1">2.1.1.166</ecNumber>
    </recommendedName>
    <alternativeName>
        <fullName evidence="1">23S rRNA Um2552 methyltransferase</fullName>
    </alternativeName>
    <alternativeName>
        <fullName evidence="1">rRNA (uridine-2'-O-)-methyltransferase</fullName>
    </alternativeName>
</protein>
<organism>
    <name type="scientific">Hamiltonella defensa subsp. Acyrthosiphon pisum (strain 5AT)</name>
    <dbReference type="NCBI Taxonomy" id="572265"/>
    <lineage>
        <taxon>Bacteria</taxon>
        <taxon>Pseudomonadati</taxon>
        <taxon>Pseudomonadota</taxon>
        <taxon>Gammaproteobacteria</taxon>
        <taxon>Enterobacterales</taxon>
        <taxon>Enterobacteriaceae</taxon>
        <taxon>aphid secondary symbionts</taxon>
        <taxon>Candidatus Hamiltonella</taxon>
    </lineage>
</organism>
<reference key="1">
    <citation type="journal article" date="2009" name="Proc. Natl. Acad. Sci. U.S.A.">
        <title>Hamiltonella defensa, genome evolution of protective bacterial endosymbiont from pathogenic ancestors.</title>
        <authorList>
            <person name="Degnan P.H."/>
            <person name="Yu Y."/>
            <person name="Sisneros N."/>
            <person name="Wing R.A."/>
            <person name="Moran N.A."/>
        </authorList>
    </citation>
    <scope>NUCLEOTIDE SEQUENCE [LARGE SCALE GENOMIC DNA]</scope>
    <source>
        <strain>5AT</strain>
    </source>
</reference>
<proteinExistence type="inferred from homology"/>
<dbReference type="EC" id="2.1.1.166" evidence="1"/>
<dbReference type="EMBL" id="CP001277">
    <property type="protein sequence ID" value="ACQ68551.1"/>
    <property type="molecule type" value="Genomic_DNA"/>
</dbReference>
<dbReference type="RefSeq" id="WP_015874310.1">
    <property type="nucleotide sequence ID" value="NC_012751.1"/>
</dbReference>
<dbReference type="SMR" id="C4K7K8"/>
<dbReference type="STRING" id="572265.HDEF_1965"/>
<dbReference type="GeneID" id="66261535"/>
<dbReference type="KEGG" id="hde:HDEF_1965"/>
<dbReference type="eggNOG" id="COG0293">
    <property type="taxonomic scope" value="Bacteria"/>
</dbReference>
<dbReference type="HOGENOM" id="CLU_009422_4_0_6"/>
<dbReference type="Proteomes" id="UP000002334">
    <property type="component" value="Chromosome"/>
</dbReference>
<dbReference type="GO" id="GO:0005737">
    <property type="term" value="C:cytoplasm"/>
    <property type="evidence" value="ECO:0007669"/>
    <property type="project" value="UniProtKB-SubCell"/>
</dbReference>
<dbReference type="GO" id="GO:0008650">
    <property type="term" value="F:rRNA (uridine-2'-O-)-methyltransferase activity"/>
    <property type="evidence" value="ECO:0007669"/>
    <property type="project" value="UniProtKB-UniRule"/>
</dbReference>
<dbReference type="CDD" id="cd02440">
    <property type="entry name" value="AdoMet_MTases"/>
    <property type="match status" value="1"/>
</dbReference>
<dbReference type="FunFam" id="3.40.50.150:FF:000005">
    <property type="entry name" value="Ribosomal RNA large subunit methyltransferase E"/>
    <property type="match status" value="1"/>
</dbReference>
<dbReference type="Gene3D" id="3.40.50.150">
    <property type="entry name" value="Vaccinia Virus protein VP39"/>
    <property type="match status" value="1"/>
</dbReference>
<dbReference type="HAMAP" id="MF_01547">
    <property type="entry name" value="RNA_methyltr_E"/>
    <property type="match status" value="1"/>
</dbReference>
<dbReference type="InterPro" id="IPR050082">
    <property type="entry name" value="RNA_methyltr_RlmE"/>
</dbReference>
<dbReference type="InterPro" id="IPR002877">
    <property type="entry name" value="RNA_MeTrfase_FtsJ_dom"/>
</dbReference>
<dbReference type="InterPro" id="IPR015507">
    <property type="entry name" value="rRNA-MeTfrase_E"/>
</dbReference>
<dbReference type="InterPro" id="IPR029063">
    <property type="entry name" value="SAM-dependent_MTases_sf"/>
</dbReference>
<dbReference type="NCBIfam" id="NF008390">
    <property type="entry name" value="PRK11188.1"/>
    <property type="match status" value="1"/>
</dbReference>
<dbReference type="PANTHER" id="PTHR10920">
    <property type="entry name" value="RIBOSOMAL RNA METHYLTRANSFERASE"/>
    <property type="match status" value="1"/>
</dbReference>
<dbReference type="PANTHER" id="PTHR10920:SF18">
    <property type="entry name" value="RRNA METHYLTRANSFERASE 2, MITOCHONDRIAL"/>
    <property type="match status" value="1"/>
</dbReference>
<dbReference type="Pfam" id="PF01728">
    <property type="entry name" value="FtsJ"/>
    <property type="match status" value="1"/>
</dbReference>
<dbReference type="PIRSF" id="PIRSF005461">
    <property type="entry name" value="23S_rRNA_mtase"/>
    <property type="match status" value="1"/>
</dbReference>
<dbReference type="SUPFAM" id="SSF53335">
    <property type="entry name" value="S-adenosyl-L-methionine-dependent methyltransferases"/>
    <property type="match status" value="1"/>
</dbReference>
<gene>
    <name evidence="1" type="primary">rlmE</name>
    <name evidence="1" type="synonym">ftsJ</name>
    <name evidence="1" type="synonym">rrmJ</name>
    <name type="ordered locus">HDEF_1965</name>
</gene>
<keyword id="KW-0963">Cytoplasm</keyword>
<keyword id="KW-0489">Methyltransferase</keyword>
<keyword id="KW-0698">rRNA processing</keyword>
<keyword id="KW-0949">S-adenosyl-L-methionine</keyword>
<keyword id="KW-0808">Transferase</keyword>
<name>RLME_HAMD5</name>
<comment type="function">
    <text evidence="1">Specifically methylates the uridine in position 2552 of 23S rRNA at the 2'-O position of the ribose in the fully assembled 50S ribosomal subunit.</text>
</comment>
<comment type="catalytic activity">
    <reaction evidence="1">
        <text>uridine(2552) in 23S rRNA + S-adenosyl-L-methionine = 2'-O-methyluridine(2552) in 23S rRNA + S-adenosyl-L-homocysteine + H(+)</text>
        <dbReference type="Rhea" id="RHEA:42720"/>
        <dbReference type="Rhea" id="RHEA-COMP:10202"/>
        <dbReference type="Rhea" id="RHEA-COMP:10203"/>
        <dbReference type="ChEBI" id="CHEBI:15378"/>
        <dbReference type="ChEBI" id="CHEBI:57856"/>
        <dbReference type="ChEBI" id="CHEBI:59789"/>
        <dbReference type="ChEBI" id="CHEBI:65315"/>
        <dbReference type="ChEBI" id="CHEBI:74478"/>
        <dbReference type="EC" id="2.1.1.166"/>
    </reaction>
</comment>
<comment type="subcellular location">
    <subcellularLocation>
        <location evidence="1">Cytoplasm</location>
    </subcellularLocation>
</comment>
<comment type="similarity">
    <text evidence="1">Belongs to the class I-like SAM-binding methyltransferase superfamily. RNA methyltransferase RlmE family.</text>
</comment>
<sequence>MSSKKRSASSRRWLQEHFNDKYVIEAQKKKLRSRAWFKLDEIDNTDKIFKRGMFVLDLGAAPGGWSQYVVNKVGLKGKVIALDLLPMDSILGVEFLQGDFREKSILKRLLNCIGDKKIDVVISDMAPNMTGISSVDIPKSMHLAELAFDISRDILIPGGSFLVKVFQGEGFEQYLREMRSLFKKVKVRKPDASRIRSREVYIVATGLK</sequence>
<evidence type="ECO:0000255" key="1">
    <source>
        <dbReference type="HAMAP-Rule" id="MF_01547"/>
    </source>
</evidence>